<comment type="function">
    <text evidence="1">Forms part of the ribosomal stalk which helps the ribosome interact with GTP-bound translation factors. Is thus essential for accurate translation.</text>
</comment>
<comment type="subunit">
    <text evidence="1">Homodimer. Part of the ribosomal stalk of the 50S ribosomal subunit. Forms a multimeric L10(L12)X complex, where L10 forms an elongated spine to which 2 to 4 L12 dimers bind in a sequential fashion. Binds GTP-bound translation factors.</text>
</comment>
<comment type="similarity">
    <text evidence="1">Belongs to the bacterial ribosomal protein bL12 family.</text>
</comment>
<keyword id="KW-0687">Ribonucleoprotein</keyword>
<keyword id="KW-0689">Ribosomal protein</keyword>
<reference key="1">
    <citation type="journal article" date="2007" name="Genome Biol.">
        <title>Comparison of Francisella tularensis genomes reveals evolutionary events associated with the emergence of human pathogenic strains.</title>
        <authorList>
            <person name="Rohmer L."/>
            <person name="Fong C."/>
            <person name="Abmayr S."/>
            <person name="Wasnick M."/>
            <person name="Larson Freeman T.J."/>
            <person name="Radey M."/>
            <person name="Guina T."/>
            <person name="Svensson K."/>
            <person name="Hayden H.S."/>
            <person name="Jacobs M."/>
            <person name="Gallagher L.A."/>
            <person name="Manoil C."/>
            <person name="Ernst R.K."/>
            <person name="Drees B."/>
            <person name="Buckley D."/>
            <person name="Haugen E."/>
            <person name="Bovee D."/>
            <person name="Zhou Y."/>
            <person name="Chang J."/>
            <person name="Levy R."/>
            <person name="Lim R."/>
            <person name="Gillett W."/>
            <person name="Guenthener D."/>
            <person name="Kang A."/>
            <person name="Shaffer S.A."/>
            <person name="Taylor G."/>
            <person name="Chen J."/>
            <person name="Gallis B."/>
            <person name="D'Argenio D.A."/>
            <person name="Forsman M."/>
            <person name="Olson M.V."/>
            <person name="Goodlett D.R."/>
            <person name="Kaul R."/>
            <person name="Miller S.I."/>
            <person name="Brittnacher M.J."/>
        </authorList>
    </citation>
    <scope>NUCLEOTIDE SEQUENCE [LARGE SCALE GENOMIC DNA]</scope>
    <source>
        <strain>U112</strain>
    </source>
</reference>
<accession>A0Q868</accession>
<proteinExistence type="inferred from homology"/>
<sequence>MAITKEDILNAVAEMSVMDVCDLVKMMEDKFGVSAAAAVAVAAGPVAGPAEAAEEKTEFDVVLVDAGSNKIAAIKAVRGATGLGLKEAKDAVEGTPFTVKEAASKEEAEALKKQLEEAGAKVELK</sequence>
<protein>
    <recommendedName>
        <fullName evidence="1">Large ribosomal subunit protein bL12</fullName>
    </recommendedName>
    <alternativeName>
        <fullName evidence="2">50S ribosomal protein L7/L12</fullName>
    </alternativeName>
</protein>
<name>RL7_FRATN</name>
<gene>
    <name evidence="1" type="primary">rplL</name>
    <name type="ordered locus">FTN_1569</name>
</gene>
<dbReference type="EMBL" id="CP000439">
    <property type="protein sequence ID" value="ABK90433.1"/>
    <property type="molecule type" value="Genomic_DNA"/>
</dbReference>
<dbReference type="RefSeq" id="WP_003024808.1">
    <property type="nucleotide sequence ID" value="NZ_CP009633.1"/>
</dbReference>
<dbReference type="SMR" id="A0Q868"/>
<dbReference type="GeneID" id="75264699"/>
<dbReference type="KEGG" id="ftn:FTN_1569"/>
<dbReference type="KEGG" id="ftx:AW25_429"/>
<dbReference type="BioCyc" id="FTUL401614:G1G75-1621-MONOMER"/>
<dbReference type="Proteomes" id="UP000000762">
    <property type="component" value="Chromosome"/>
</dbReference>
<dbReference type="GO" id="GO:0022625">
    <property type="term" value="C:cytosolic large ribosomal subunit"/>
    <property type="evidence" value="ECO:0007669"/>
    <property type="project" value="TreeGrafter"/>
</dbReference>
<dbReference type="GO" id="GO:0003729">
    <property type="term" value="F:mRNA binding"/>
    <property type="evidence" value="ECO:0007669"/>
    <property type="project" value="TreeGrafter"/>
</dbReference>
<dbReference type="GO" id="GO:0003735">
    <property type="term" value="F:structural constituent of ribosome"/>
    <property type="evidence" value="ECO:0007669"/>
    <property type="project" value="InterPro"/>
</dbReference>
<dbReference type="GO" id="GO:0006412">
    <property type="term" value="P:translation"/>
    <property type="evidence" value="ECO:0007669"/>
    <property type="project" value="UniProtKB-UniRule"/>
</dbReference>
<dbReference type="CDD" id="cd00387">
    <property type="entry name" value="Ribosomal_L7_L12"/>
    <property type="match status" value="1"/>
</dbReference>
<dbReference type="FunFam" id="3.30.1390.10:FF:000001">
    <property type="entry name" value="50S ribosomal protein L7/L12"/>
    <property type="match status" value="1"/>
</dbReference>
<dbReference type="Gene3D" id="3.30.1390.10">
    <property type="match status" value="1"/>
</dbReference>
<dbReference type="Gene3D" id="1.20.5.710">
    <property type="entry name" value="Single helix bin"/>
    <property type="match status" value="1"/>
</dbReference>
<dbReference type="HAMAP" id="MF_00368">
    <property type="entry name" value="Ribosomal_bL12"/>
    <property type="match status" value="1"/>
</dbReference>
<dbReference type="InterPro" id="IPR000206">
    <property type="entry name" value="Ribosomal_bL12"/>
</dbReference>
<dbReference type="InterPro" id="IPR013823">
    <property type="entry name" value="Ribosomal_bL12_C"/>
</dbReference>
<dbReference type="InterPro" id="IPR014719">
    <property type="entry name" value="Ribosomal_bL12_C/ClpS-like"/>
</dbReference>
<dbReference type="InterPro" id="IPR008932">
    <property type="entry name" value="Ribosomal_bL12_oligo"/>
</dbReference>
<dbReference type="InterPro" id="IPR036235">
    <property type="entry name" value="Ribosomal_bL12_oligo_N_sf"/>
</dbReference>
<dbReference type="NCBIfam" id="TIGR00855">
    <property type="entry name" value="L12"/>
    <property type="match status" value="1"/>
</dbReference>
<dbReference type="PANTHER" id="PTHR45987">
    <property type="entry name" value="39S RIBOSOMAL PROTEIN L12"/>
    <property type="match status" value="1"/>
</dbReference>
<dbReference type="PANTHER" id="PTHR45987:SF4">
    <property type="entry name" value="LARGE RIBOSOMAL SUBUNIT PROTEIN BL12M"/>
    <property type="match status" value="1"/>
</dbReference>
<dbReference type="Pfam" id="PF00542">
    <property type="entry name" value="Ribosomal_L12"/>
    <property type="match status" value="1"/>
</dbReference>
<dbReference type="Pfam" id="PF16320">
    <property type="entry name" value="Ribosomal_L12_N"/>
    <property type="match status" value="1"/>
</dbReference>
<dbReference type="SUPFAM" id="SSF54736">
    <property type="entry name" value="ClpS-like"/>
    <property type="match status" value="1"/>
</dbReference>
<dbReference type="SUPFAM" id="SSF48300">
    <property type="entry name" value="Ribosomal protein L7/12, oligomerisation (N-terminal) domain"/>
    <property type="match status" value="1"/>
</dbReference>
<evidence type="ECO:0000255" key="1">
    <source>
        <dbReference type="HAMAP-Rule" id="MF_00368"/>
    </source>
</evidence>
<evidence type="ECO:0000305" key="2"/>
<organism>
    <name type="scientific">Francisella tularensis subsp. novicida (strain U112)</name>
    <dbReference type="NCBI Taxonomy" id="401614"/>
    <lineage>
        <taxon>Bacteria</taxon>
        <taxon>Pseudomonadati</taxon>
        <taxon>Pseudomonadota</taxon>
        <taxon>Gammaproteobacteria</taxon>
        <taxon>Thiotrichales</taxon>
        <taxon>Francisellaceae</taxon>
        <taxon>Francisella</taxon>
    </lineage>
</organism>
<feature type="chain" id="PRO_1000007009" description="Large ribosomal subunit protein bL12">
    <location>
        <begin position="1"/>
        <end position="125"/>
    </location>
</feature>